<proteinExistence type="inferred from homology"/>
<keyword id="KW-0131">Cell cycle</keyword>
<keyword id="KW-0132">Cell division</keyword>
<keyword id="KW-0574">Periplasm</keyword>
<keyword id="KW-0732">Signal</keyword>
<comment type="function">
    <text evidence="1">Part of the Tol-Pal system, which plays a role in outer membrane invagination during cell division and is important for maintaining outer membrane integrity.</text>
</comment>
<comment type="subunit">
    <text evidence="1">The Tol-Pal system is composed of five core proteins: the inner membrane proteins TolA, TolQ and TolR, the periplasmic protein TolB and the outer membrane protein Pal. They form a network linking the inner and outer membranes and the peptidoglycan layer.</text>
</comment>
<comment type="subcellular location">
    <subcellularLocation>
        <location evidence="1">Periplasm</location>
    </subcellularLocation>
</comment>
<comment type="similarity">
    <text evidence="1">Belongs to the TolB family.</text>
</comment>
<organism>
    <name type="scientific">Vibrio parahaemolyticus serotype O3:K6 (strain RIMD 2210633)</name>
    <dbReference type="NCBI Taxonomy" id="223926"/>
    <lineage>
        <taxon>Bacteria</taxon>
        <taxon>Pseudomonadati</taxon>
        <taxon>Pseudomonadota</taxon>
        <taxon>Gammaproteobacteria</taxon>
        <taxon>Vibrionales</taxon>
        <taxon>Vibrionaceae</taxon>
        <taxon>Vibrio</taxon>
    </lineage>
</organism>
<gene>
    <name evidence="1" type="primary">tolB</name>
    <name type="ordered locus">VP1060</name>
</gene>
<reference key="1">
    <citation type="journal article" date="2003" name="Lancet">
        <title>Genome sequence of Vibrio parahaemolyticus: a pathogenic mechanism distinct from that of V. cholerae.</title>
        <authorList>
            <person name="Makino K."/>
            <person name="Oshima K."/>
            <person name="Kurokawa K."/>
            <person name="Yokoyama K."/>
            <person name="Uda T."/>
            <person name="Tagomori K."/>
            <person name="Iijima Y."/>
            <person name="Najima M."/>
            <person name="Nakano M."/>
            <person name="Yamashita A."/>
            <person name="Kubota Y."/>
            <person name="Kimura S."/>
            <person name="Yasunaga T."/>
            <person name="Honda T."/>
            <person name="Shinagawa H."/>
            <person name="Hattori M."/>
            <person name="Iida T."/>
        </authorList>
    </citation>
    <scope>NUCLEOTIDE SEQUENCE [LARGE SCALE GENOMIC DNA]</scope>
    <source>
        <strain>RIMD 2210633</strain>
    </source>
</reference>
<accession>Q87QT9</accession>
<dbReference type="EMBL" id="BA000031">
    <property type="protein sequence ID" value="BAC59323.1"/>
    <property type="molecule type" value="Genomic_DNA"/>
</dbReference>
<dbReference type="RefSeq" id="NP_797439.1">
    <property type="nucleotide sequence ID" value="NC_004603.1"/>
</dbReference>
<dbReference type="RefSeq" id="WP_005459807.1">
    <property type="nucleotide sequence ID" value="NC_004603.1"/>
</dbReference>
<dbReference type="SMR" id="Q87QT9"/>
<dbReference type="GeneID" id="1188564"/>
<dbReference type="KEGG" id="vpa:VP1060"/>
<dbReference type="PATRIC" id="fig|223926.6.peg.1005"/>
<dbReference type="eggNOG" id="COG0823">
    <property type="taxonomic scope" value="Bacteria"/>
</dbReference>
<dbReference type="HOGENOM" id="CLU_047123_0_0_6"/>
<dbReference type="Proteomes" id="UP000002493">
    <property type="component" value="Chromosome 1"/>
</dbReference>
<dbReference type="GO" id="GO:0042597">
    <property type="term" value="C:periplasmic space"/>
    <property type="evidence" value="ECO:0007669"/>
    <property type="project" value="UniProtKB-SubCell"/>
</dbReference>
<dbReference type="GO" id="GO:0051301">
    <property type="term" value="P:cell division"/>
    <property type="evidence" value="ECO:0007669"/>
    <property type="project" value="UniProtKB-UniRule"/>
</dbReference>
<dbReference type="GO" id="GO:0017038">
    <property type="term" value="P:protein import"/>
    <property type="evidence" value="ECO:0007669"/>
    <property type="project" value="InterPro"/>
</dbReference>
<dbReference type="Gene3D" id="2.120.10.30">
    <property type="entry name" value="TolB, C-terminal domain"/>
    <property type="match status" value="1"/>
</dbReference>
<dbReference type="Gene3D" id="3.40.50.10070">
    <property type="entry name" value="TolB, N-terminal domain"/>
    <property type="match status" value="1"/>
</dbReference>
<dbReference type="HAMAP" id="MF_00671">
    <property type="entry name" value="TolB"/>
    <property type="match status" value="1"/>
</dbReference>
<dbReference type="InterPro" id="IPR011042">
    <property type="entry name" value="6-blade_b-propeller_TolB-like"/>
</dbReference>
<dbReference type="InterPro" id="IPR011659">
    <property type="entry name" value="PD40"/>
</dbReference>
<dbReference type="InterPro" id="IPR014167">
    <property type="entry name" value="Tol-Pal_TolB"/>
</dbReference>
<dbReference type="InterPro" id="IPR007195">
    <property type="entry name" value="TolB_N"/>
</dbReference>
<dbReference type="NCBIfam" id="TIGR02800">
    <property type="entry name" value="propeller_TolB"/>
    <property type="match status" value="1"/>
</dbReference>
<dbReference type="PANTHER" id="PTHR36842:SF1">
    <property type="entry name" value="PROTEIN TOLB"/>
    <property type="match status" value="1"/>
</dbReference>
<dbReference type="PANTHER" id="PTHR36842">
    <property type="entry name" value="PROTEIN TOLB HOMOLOG"/>
    <property type="match status" value="1"/>
</dbReference>
<dbReference type="Pfam" id="PF07676">
    <property type="entry name" value="PD40"/>
    <property type="match status" value="3"/>
</dbReference>
<dbReference type="Pfam" id="PF04052">
    <property type="entry name" value="TolB_N"/>
    <property type="match status" value="1"/>
</dbReference>
<dbReference type="SUPFAM" id="SSF52964">
    <property type="entry name" value="TolB, N-terminal domain"/>
    <property type="match status" value="1"/>
</dbReference>
<dbReference type="SUPFAM" id="SSF69304">
    <property type="entry name" value="Tricorn protease N-terminal domain"/>
    <property type="match status" value="1"/>
</dbReference>
<protein>
    <recommendedName>
        <fullName evidence="1">Tol-Pal system protein TolB</fullName>
    </recommendedName>
</protein>
<feature type="signal peptide" evidence="1">
    <location>
        <begin position="1"/>
        <end position="22"/>
    </location>
</feature>
<feature type="chain" id="PRO_0000034691" description="Tol-Pal system protein TolB" evidence="1">
    <location>
        <begin position="23"/>
        <end position="450"/>
    </location>
</feature>
<evidence type="ECO:0000255" key="1">
    <source>
        <dbReference type="HAMAP-Rule" id="MF_00671"/>
    </source>
</evidence>
<sequence length="450" mass="49786">MIKRLLLGMFVLLGSLTNVAHAALELVITDGIDSARPIAVVPFKWEGSQPLPTDISAVIASDLQRSGKFSPVPTNKMPQTPFNESEVNFDSWTSLGVDALLTGSIKQNEQGDYVVNYQLVDVVRGQLTGGQSKALGSDGELVLSKDHVLFNKVATVKGPRMREYAHRISDLVYEQLTGERGAFMTRIAYVVVNDKDRFPYQLRVADYDGYNERLVLRSKQPLMSPAWSPDGQKLAYVSFQNGQAEIFIMNIYTGEREKITSYPRHNGAPRFSPDGNKLALVLSKTGTLQVYTFDLKTRKLTQITRSRSNNTEPFWHPDGKSLIFTSDRGGKPQIYQVNLGSGSIDRLTWQGSQNLGGQITPDGRFLVMVNRSDSGFNLAKQDLETGALQVLTKTLLDESPSIAPNGGMVVYSSIYNKKNVLSMVSIDGRFKARLPATNGRVRAPAWSPFL</sequence>
<name>TOLB_VIBPA</name>